<organism>
    <name type="scientific">Caenorhabditis elegans</name>
    <dbReference type="NCBI Taxonomy" id="6239"/>
    <lineage>
        <taxon>Eukaryota</taxon>
        <taxon>Metazoa</taxon>
        <taxon>Ecdysozoa</taxon>
        <taxon>Nematoda</taxon>
        <taxon>Chromadorea</taxon>
        <taxon>Rhabditida</taxon>
        <taxon>Rhabditina</taxon>
        <taxon>Rhabditomorpha</taxon>
        <taxon>Rhabditoidea</taxon>
        <taxon>Rhabditidae</taxon>
        <taxon>Peloderinae</taxon>
        <taxon>Caenorhabditis</taxon>
    </lineage>
</organism>
<sequence length="856" mass="94893">MEQFDGFEYSKRDLLGHGAFAIVYRGRYVDRTDVPVAIKAIAKKNISKSKNLLTKEIKILKELSSLKHENLVGLLKCTETPTHVYLVMEFCNGGDLADYLQQKTTLNEDTIQHFVVQIAHALEAINKKGIVHRDLKPQNILLCNNSRTQNPHFTDIVIKLADFGFARFLNDGVMAATLCGSPMYMAPEVIMSMQYDAKADLWSIGTILFQCLTGKAPFVAQTPPQLKAYYEKTRELRPNIPEWCSPNLRDLLLRLLKRNAKDRISFEDFFNHPFLTSPLLPSPSKRILESARSPLLANRRIITPQSSLPVPKRAGSTKLDSPTPVRRIGESPRVQRRVITPGMPSPVPGAPMQESTDFTFLPPRQESSPVKQVQVHTNVSPSLTTCKPVPVPSQRLTYQKMEERLAAARKTAVPSSSSPTGSAVSAQHQHQHQQQQEPASSPVVQRIERPDQLPRRTTLQDPNAHDIERMTMPNPTFVVCGSSTKPSPNNANRVRRSTITSPADTQDMVAADQMLSNLDPTTTTTTIPKSATTANIQGIPRGARDRSVTSPPQPTIHENEPLDNAKYQQTDVNNSPTAPTEPFIIKNQTTCSTSSTSSSVVEEEEAMSLPFASGSHLAAGFKKTPAEVPMDHGALPPALDQEIVLGEEHKQILAKLRFVAELVDTLIHVAEQKDNPLASAMASRRQLLTTGTSTTNTSSPYRRAEQLVVYVRALHMLSSALLLAQTNVANRVLHPSVAVQQVLNQLNDKYHQCLVRSQELASLGLPGQDPAMAVISAERIMYRHAIELCQAAALDELFGNPQLCSQRYQTAYMMLHTLAEQVNCDQDKTVLTRYKVAVEKRLRILERQGFVAAVNT</sequence>
<protein>
    <recommendedName>
        <fullName>Serine/threonine-protein kinase unc-51</fullName>
        <ecNumber evidence="5">2.7.11.1</ecNumber>
    </recommendedName>
    <alternativeName>
        <fullName>Uncoordinated protein 51</fullName>
    </alternativeName>
</protein>
<evidence type="ECO:0000255" key="1">
    <source>
        <dbReference type="PROSITE-ProRule" id="PRU00159"/>
    </source>
</evidence>
<evidence type="ECO:0000255" key="2">
    <source>
        <dbReference type="PROSITE-ProRule" id="PRU10027"/>
    </source>
</evidence>
<evidence type="ECO:0000256" key="3">
    <source>
        <dbReference type="SAM" id="MobiDB-lite"/>
    </source>
</evidence>
<evidence type="ECO:0000269" key="4">
    <source>
    </source>
</evidence>
<evidence type="ECO:0000269" key="5">
    <source>
    </source>
</evidence>
<evidence type="ECO:0000269" key="6">
    <source>
    </source>
</evidence>
<evidence type="ECO:0000269" key="7">
    <source>
    </source>
</evidence>
<evidence type="ECO:0000269" key="8">
    <source>
    </source>
</evidence>
<evidence type="ECO:0000269" key="9">
    <source>
    </source>
</evidence>
<evidence type="ECO:0000269" key="10">
    <source>
    </source>
</evidence>
<evidence type="ECO:0000305" key="11">
    <source>
    </source>
</evidence>
<evidence type="ECO:0000305" key="12">
    <source>
    </source>
</evidence>
<evidence type="ECO:0000312" key="13">
    <source>
        <dbReference type="WormBase" id="Y60A3A.1"/>
    </source>
</evidence>
<feature type="chain" id="PRO_0000086785" description="Serine/threonine-protein kinase unc-51">
    <location>
        <begin position="1"/>
        <end position="856"/>
    </location>
</feature>
<feature type="domain" description="Protein kinase" evidence="1">
    <location>
        <begin position="9"/>
        <end position="275"/>
    </location>
</feature>
<feature type="region of interest" description="Disordered" evidence="3">
    <location>
        <begin position="304"/>
        <end position="327"/>
    </location>
</feature>
<feature type="region of interest" description="Disordered" evidence="3">
    <location>
        <begin position="362"/>
        <end position="391"/>
    </location>
</feature>
<feature type="region of interest" description="Disordered" evidence="3">
    <location>
        <begin position="405"/>
        <end position="471"/>
    </location>
</feature>
<feature type="region of interest" description="Disordered" evidence="3">
    <location>
        <begin position="520"/>
        <end position="582"/>
    </location>
</feature>
<feature type="region of interest" description="Required for interaction with unc-14 and vab-8" evidence="5">
    <location>
        <begin position="750"/>
        <end position="856"/>
    </location>
</feature>
<feature type="short sequence motif" description="LIR" evidence="8">
    <location>
        <begin position="358"/>
        <end position="361"/>
    </location>
</feature>
<feature type="compositionally biased region" description="Polar residues" evidence="3">
    <location>
        <begin position="365"/>
        <end position="385"/>
    </location>
</feature>
<feature type="compositionally biased region" description="Low complexity" evidence="3">
    <location>
        <begin position="411"/>
        <end position="436"/>
    </location>
</feature>
<feature type="compositionally biased region" description="Polar residues" evidence="3">
    <location>
        <begin position="527"/>
        <end position="536"/>
    </location>
</feature>
<feature type="compositionally biased region" description="Polar residues" evidence="3">
    <location>
        <begin position="566"/>
        <end position="578"/>
    </location>
</feature>
<feature type="active site" description="Proton acceptor" evidence="1 2">
    <location>
        <position position="134"/>
    </location>
</feature>
<feature type="binding site" evidence="1">
    <location>
        <begin position="15"/>
        <end position="23"/>
    </location>
    <ligand>
        <name>ATP</name>
        <dbReference type="ChEBI" id="CHEBI:30616"/>
    </ligand>
</feature>
<feature type="binding site" evidence="11 12">
    <location>
        <position position="39"/>
    </location>
    <ligand>
        <name>ATP</name>
        <dbReference type="ChEBI" id="CHEBI:30616"/>
    </ligand>
</feature>
<feature type="site" description="Required for interaction with lgg-1" evidence="8">
    <location>
        <position position="357"/>
    </location>
</feature>
<feature type="mutagenesis site" description="Abrogates kinase activity." evidence="5">
    <location>
        <begin position="37"/>
        <end position="41"/>
    </location>
</feature>
<feature type="mutagenesis site" description="In KSEX9; variable effects." evidence="5 10">
    <original>K</original>
    <variation>M</variation>
    <location>
        <position position="39"/>
    </location>
</feature>
<feature type="mutagenesis site" description="Impairs kinase activity." evidence="5 10">
    <original>K</original>
    <variation>R</variation>
    <location>
        <position position="39"/>
    </location>
</feature>
<feature type="mutagenesis site" description="Impairs the interaction with lgg-1." evidence="8">
    <original>F</original>
    <variation>A</variation>
    <location>
        <position position="358"/>
    </location>
</feature>
<feature type="mutagenesis site" description="Impairs the interaction with lgg-1." evidence="8">
    <original>F</original>
    <variation>A</variation>
    <location>
        <position position="360"/>
    </location>
</feature>
<feature type="mutagenesis site" description="In E1120; paralyzed, egg laying defective and dumpy." evidence="10">
    <original>R</original>
    <variation>H</variation>
    <location>
        <position position="841"/>
    </location>
</feature>
<dbReference type="EC" id="2.7.11.1" evidence="5"/>
<dbReference type="EMBL" id="Z38016">
    <property type="protein sequence ID" value="CAA86114.1"/>
    <property type="molecule type" value="mRNA"/>
</dbReference>
<dbReference type="EMBL" id="BX284605">
    <property type="protein sequence ID" value="CAB60406.1"/>
    <property type="molecule type" value="Genomic_DNA"/>
</dbReference>
<dbReference type="PIR" id="T43631">
    <property type="entry name" value="T43631"/>
</dbReference>
<dbReference type="RefSeq" id="NP_507869.1">
    <property type="nucleotide sequence ID" value="NM_075468.7"/>
</dbReference>
<dbReference type="PDB" id="5AZG">
    <property type="method" value="X-ray"/>
    <property type="resolution" value="1.81 A"/>
    <property type="chains" value="C/D=353-361"/>
</dbReference>
<dbReference type="PDBsum" id="5AZG"/>
<dbReference type="SMR" id="Q23023"/>
<dbReference type="BioGRID" id="45271">
    <property type="interactions" value="11"/>
</dbReference>
<dbReference type="ComplexPortal" id="CPX-4821">
    <property type="entry name" value="unc-51-atg-13 complex"/>
</dbReference>
<dbReference type="DIP" id="DIP-26124N"/>
<dbReference type="FunCoup" id="Q23023">
    <property type="interactions" value="1746"/>
</dbReference>
<dbReference type="IntAct" id="Q23023">
    <property type="interactions" value="2"/>
</dbReference>
<dbReference type="STRING" id="6239.Y60A3A.1.1"/>
<dbReference type="iPTMnet" id="Q23023"/>
<dbReference type="PaxDb" id="6239-Y60A3A.1"/>
<dbReference type="PeptideAtlas" id="Q23023"/>
<dbReference type="EnsemblMetazoa" id="Y60A3A.1.1">
    <property type="protein sequence ID" value="Y60A3A.1.1"/>
    <property type="gene ID" value="WBGene00006786"/>
</dbReference>
<dbReference type="GeneID" id="180311"/>
<dbReference type="KEGG" id="cel:CELE_Y60A3A.1"/>
<dbReference type="UCSC" id="Y60A3A.1.1">
    <property type="organism name" value="c. elegans"/>
</dbReference>
<dbReference type="AGR" id="WB:WBGene00006786"/>
<dbReference type="CTD" id="180311"/>
<dbReference type="WormBase" id="Y60A3A.1">
    <property type="protein sequence ID" value="CE24516"/>
    <property type="gene ID" value="WBGene00006786"/>
    <property type="gene designation" value="unc-51"/>
</dbReference>
<dbReference type="eggNOG" id="KOG0595">
    <property type="taxonomic scope" value="Eukaryota"/>
</dbReference>
<dbReference type="GeneTree" id="ENSGT00940000171394"/>
<dbReference type="HOGENOM" id="CLU_011264_1_0_1"/>
<dbReference type="InParanoid" id="Q23023"/>
<dbReference type="OMA" id="SFFSHPF"/>
<dbReference type="OrthoDB" id="346907at2759"/>
<dbReference type="PhylomeDB" id="Q23023"/>
<dbReference type="BRENDA" id="2.7.11.1">
    <property type="organism ID" value="1045"/>
</dbReference>
<dbReference type="Reactome" id="R-CEL-1632852">
    <property type="pathway name" value="Macroautophagy"/>
</dbReference>
<dbReference type="Reactome" id="R-CEL-8854214">
    <property type="pathway name" value="TBC/RABGAPs"/>
</dbReference>
<dbReference type="Reactome" id="R-CEL-8934903">
    <property type="pathway name" value="Receptor Mediated Mitophagy"/>
</dbReference>
<dbReference type="PRO" id="PR:Q23023"/>
<dbReference type="Proteomes" id="UP000001940">
    <property type="component" value="Chromosome V"/>
</dbReference>
<dbReference type="Bgee" id="WBGene00006786">
    <property type="expression patterns" value="Expressed in pharyngeal muscle cell (C elegans) and 3 other cell types or tissues"/>
</dbReference>
<dbReference type="GO" id="GO:0005776">
    <property type="term" value="C:autophagosome"/>
    <property type="evidence" value="ECO:0000318"/>
    <property type="project" value="GO_Central"/>
</dbReference>
<dbReference type="GO" id="GO:0030424">
    <property type="term" value="C:axon"/>
    <property type="evidence" value="ECO:0000314"/>
    <property type="project" value="WormBase"/>
</dbReference>
<dbReference type="GO" id="GO:0005737">
    <property type="term" value="C:cytoplasm"/>
    <property type="evidence" value="ECO:0000318"/>
    <property type="project" value="GO_Central"/>
</dbReference>
<dbReference type="GO" id="GO:0005829">
    <property type="term" value="C:cytosol"/>
    <property type="evidence" value="ECO:0000318"/>
    <property type="project" value="GO_Central"/>
</dbReference>
<dbReference type="GO" id="GO:0043005">
    <property type="term" value="C:neuron projection"/>
    <property type="evidence" value="ECO:0000314"/>
    <property type="project" value="WormBase"/>
</dbReference>
<dbReference type="GO" id="GO:0043025">
    <property type="term" value="C:neuronal cell body"/>
    <property type="evidence" value="ECO:0000314"/>
    <property type="project" value="WormBase"/>
</dbReference>
<dbReference type="GO" id="GO:0000407">
    <property type="term" value="C:phagophore assembly site"/>
    <property type="evidence" value="ECO:0000318"/>
    <property type="project" value="GO_Central"/>
</dbReference>
<dbReference type="GO" id="GO:0034045">
    <property type="term" value="C:phagophore assembly site membrane"/>
    <property type="evidence" value="ECO:0000318"/>
    <property type="project" value="GO_Central"/>
</dbReference>
<dbReference type="GO" id="GO:1902554">
    <property type="term" value="C:serine/threonine protein kinase complex"/>
    <property type="evidence" value="ECO:0000303"/>
    <property type="project" value="ComplexPortal"/>
</dbReference>
<dbReference type="GO" id="GO:0005524">
    <property type="term" value="F:ATP binding"/>
    <property type="evidence" value="ECO:0007669"/>
    <property type="project" value="UniProtKB-KW"/>
</dbReference>
<dbReference type="GO" id="GO:0046872">
    <property type="term" value="F:metal ion binding"/>
    <property type="evidence" value="ECO:0007669"/>
    <property type="project" value="UniProtKB-KW"/>
</dbReference>
<dbReference type="GO" id="GO:0106310">
    <property type="term" value="F:protein serine kinase activity"/>
    <property type="evidence" value="ECO:0007669"/>
    <property type="project" value="RHEA"/>
</dbReference>
<dbReference type="GO" id="GO:0004674">
    <property type="term" value="F:protein serine/threonine kinase activity"/>
    <property type="evidence" value="ECO:0000314"/>
    <property type="project" value="WormBase"/>
</dbReference>
<dbReference type="GO" id="GO:0043277">
    <property type="term" value="P:apoptotic cell clearance"/>
    <property type="evidence" value="ECO:0000315"/>
    <property type="project" value="WormBase"/>
</dbReference>
<dbReference type="GO" id="GO:0000045">
    <property type="term" value="P:autophagosome assembly"/>
    <property type="evidence" value="ECO:0000318"/>
    <property type="project" value="GO_Central"/>
</dbReference>
<dbReference type="GO" id="GO:0006914">
    <property type="term" value="P:autophagy"/>
    <property type="evidence" value="ECO:0000316"/>
    <property type="project" value="WormBase"/>
</dbReference>
<dbReference type="GO" id="GO:0048675">
    <property type="term" value="P:axon extension"/>
    <property type="evidence" value="ECO:0000318"/>
    <property type="project" value="GO_Central"/>
</dbReference>
<dbReference type="GO" id="GO:0007411">
    <property type="term" value="P:axon guidance"/>
    <property type="evidence" value="ECO:0000315"/>
    <property type="project" value="WormBase"/>
</dbReference>
<dbReference type="GO" id="GO:0007409">
    <property type="term" value="P:axonogenesis"/>
    <property type="evidence" value="ECO:0000315"/>
    <property type="project" value="WormBase"/>
</dbReference>
<dbReference type="GO" id="GO:0016477">
    <property type="term" value="P:cell migration"/>
    <property type="evidence" value="ECO:0000315"/>
    <property type="project" value="WormBase"/>
</dbReference>
<dbReference type="GO" id="GO:0040024">
    <property type="term" value="P:dauer larval development"/>
    <property type="evidence" value="ECO:0000316"/>
    <property type="project" value="WormBase"/>
</dbReference>
<dbReference type="GO" id="GO:0008340">
    <property type="term" value="P:determination of adult lifespan"/>
    <property type="evidence" value="ECO:0000316"/>
    <property type="project" value="WormBase"/>
</dbReference>
<dbReference type="GO" id="GO:0009792">
    <property type="term" value="P:embryo development ending in birth or egg hatching"/>
    <property type="evidence" value="ECO:0000316"/>
    <property type="project" value="WormBase"/>
</dbReference>
<dbReference type="GO" id="GO:0016236">
    <property type="term" value="P:macroautophagy"/>
    <property type="evidence" value="ECO:0000303"/>
    <property type="project" value="ComplexPortal"/>
</dbReference>
<dbReference type="GO" id="GO:0000423">
    <property type="term" value="P:mitophagy"/>
    <property type="evidence" value="ECO:0000318"/>
    <property type="project" value="GO_Central"/>
</dbReference>
<dbReference type="GO" id="GO:0045138">
    <property type="term" value="P:nematode male tail tip morphogenesis"/>
    <property type="evidence" value="ECO:0000315"/>
    <property type="project" value="WormBase"/>
</dbReference>
<dbReference type="GO" id="GO:0034727">
    <property type="term" value="P:piecemeal microautophagy of the nucleus"/>
    <property type="evidence" value="ECO:0000318"/>
    <property type="project" value="GO_Central"/>
</dbReference>
<dbReference type="GO" id="GO:0012501">
    <property type="term" value="P:programmed cell death"/>
    <property type="evidence" value="ECO:0000316"/>
    <property type="project" value="WormBase"/>
</dbReference>
<dbReference type="GO" id="GO:0010506">
    <property type="term" value="P:regulation of autophagy"/>
    <property type="evidence" value="ECO:0000318"/>
    <property type="project" value="GO_Central"/>
</dbReference>
<dbReference type="GO" id="GO:0030516">
    <property type="term" value="P:regulation of axon extension"/>
    <property type="evidence" value="ECO:0000315"/>
    <property type="project" value="WormBase"/>
</dbReference>
<dbReference type="GO" id="GO:0008361">
    <property type="term" value="P:regulation of cell size"/>
    <property type="evidence" value="ECO:0000315"/>
    <property type="project" value="WormBase"/>
</dbReference>
<dbReference type="GO" id="GO:0040014">
    <property type="term" value="P:regulation of multicellular organism growth"/>
    <property type="evidence" value="ECO:0000316"/>
    <property type="project" value="WormBase"/>
</dbReference>
<dbReference type="GO" id="GO:0032880">
    <property type="term" value="P:regulation of protein localization"/>
    <property type="evidence" value="ECO:0000315"/>
    <property type="project" value="WormBase"/>
</dbReference>
<dbReference type="GO" id="GO:0042594">
    <property type="term" value="P:response to starvation"/>
    <property type="evidence" value="ECO:0000318"/>
    <property type="project" value="GO_Central"/>
</dbReference>
<dbReference type="GO" id="GO:0061709">
    <property type="term" value="P:reticulophagy"/>
    <property type="evidence" value="ECO:0000318"/>
    <property type="project" value="GO_Central"/>
</dbReference>
<dbReference type="CDD" id="cd14120">
    <property type="entry name" value="STKc_ULK1_2-like"/>
    <property type="match status" value="1"/>
</dbReference>
<dbReference type="FunFam" id="3.30.200.20:FF:000917">
    <property type="entry name" value="Serine/threonine-protein kinase unc-51"/>
    <property type="match status" value="1"/>
</dbReference>
<dbReference type="FunFam" id="1.10.510.10:FF:000493">
    <property type="entry name" value="serine/threonine-protein kinase unc-51 isoform X2"/>
    <property type="match status" value="1"/>
</dbReference>
<dbReference type="Gene3D" id="3.30.200.20">
    <property type="entry name" value="Phosphorylase Kinase, domain 1"/>
    <property type="match status" value="1"/>
</dbReference>
<dbReference type="Gene3D" id="1.10.510.10">
    <property type="entry name" value="Transferase(Phosphotransferase) domain 1"/>
    <property type="match status" value="1"/>
</dbReference>
<dbReference type="InterPro" id="IPR045269">
    <property type="entry name" value="Atg1-like"/>
</dbReference>
<dbReference type="InterPro" id="IPR048941">
    <property type="entry name" value="ATG1-like_MIT2"/>
</dbReference>
<dbReference type="InterPro" id="IPR022708">
    <property type="entry name" value="Atg1-like_tMIT"/>
</dbReference>
<dbReference type="InterPro" id="IPR011009">
    <property type="entry name" value="Kinase-like_dom_sf"/>
</dbReference>
<dbReference type="InterPro" id="IPR000719">
    <property type="entry name" value="Prot_kinase_dom"/>
</dbReference>
<dbReference type="InterPro" id="IPR017441">
    <property type="entry name" value="Protein_kinase_ATP_BS"/>
</dbReference>
<dbReference type="InterPro" id="IPR008271">
    <property type="entry name" value="Ser/Thr_kinase_AS"/>
</dbReference>
<dbReference type="InterPro" id="IPR017184">
    <property type="entry name" value="Ser/Thr_kinase_Unc51"/>
</dbReference>
<dbReference type="PANTHER" id="PTHR24348:SF22">
    <property type="entry name" value="NON-SPECIFIC SERINE_THREONINE PROTEIN KINASE"/>
    <property type="match status" value="1"/>
</dbReference>
<dbReference type="PANTHER" id="PTHR24348">
    <property type="entry name" value="SERINE/THREONINE-PROTEIN KINASE UNC-51-RELATED"/>
    <property type="match status" value="1"/>
</dbReference>
<dbReference type="Pfam" id="PF12063">
    <property type="entry name" value="ATG1-like_MIT1"/>
    <property type="match status" value="1"/>
</dbReference>
<dbReference type="Pfam" id="PF21127">
    <property type="entry name" value="ATG1-like_MIT2"/>
    <property type="match status" value="1"/>
</dbReference>
<dbReference type="Pfam" id="PF00069">
    <property type="entry name" value="Pkinase"/>
    <property type="match status" value="1"/>
</dbReference>
<dbReference type="PIRSF" id="PIRSF037369">
    <property type="entry name" value="Ser/Thr_PK_unc51"/>
    <property type="match status" value="1"/>
</dbReference>
<dbReference type="SMART" id="SM00220">
    <property type="entry name" value="S_TKc"/>
    <property type="match status" value="1"/>
</dbReference>
<dbReference type="SUPFAM" id="SSF56112">
    <property type="entry name" value="Protein kinase-like (PK-like)"/>
    <property type="match status" value="1"/>
</dbReference>
<dbReference type="PROSITE" id="PS00107">
    <property type="entry name" value="PROTEIN_KINASE_ATP"/>
    <property type="match status" value="1"/>
</dbReference>
<dbReference type="PROSITE" id="PS50011">
    <property type="entry name" value="PROTEIN_KINASE_DOM"/>
    <property type="match status" value="1"/>
</dbReference>
<dbReference type="PROSITE" id="PS00108">
    <property type="entry name" value="PROTEIN_KINASE_ST"/>
    <property type="match status" value="1"/>
</dbReference>
<comment type="function">
    <text evidence="4 5 6 7 8 9 10">Protein kinase important for axonal elongation and axonal guidance (PubMed:15539493, PubMed:7958904). Functions in the CAN axons to direct both anterior and posterior migrations (PubMed:15539493). Phosphorylates both unc-14 and vab-8 (PubMed:15539493). Component of the unc-51/atg-13 complex that is probably recruited by lgg-1 to preautophagosomes and is required for autophagosome formation (PubMed:12958363, PubMed:17890369, PubMed:19377305, PubMed:26687600). Interaction with autophagy related proteins such as atg-13 links it to the autophagy machinery to in turn promote P-granule degradation in somatic cells (PubMed:19377305). Plays a role in mitophagy during limited food availability (PubMed:30133321). Regulates cell size (PubMed:17890369). Plays a role in male tail ray pattern formation (PubMed:17890369). May be required for normal dauer morphogenesis (PubMed:12958363).</text>
</comment>
<comment type="catalytic activity">
    <reaction evidence="5">
        <text>L-seryl-[protein] + ATP = O-phospho-L-seryl-[protein] + ADP + H(+)</text>
        <dbReference type="Rhea" id="RHEA:17989"/>
        <dbReference type="Rhea" id="RHEA-COMP:9863"/>
        <dbReference type="Rhea" id="RHEA-COMP:11604"/>
        <dbReference type="ChEBI" id="CHEBI:15378"/>
        <dbReference type="ChEBI" id="CHEBI:29999"/>
        <dbReference type="ChEBI" id="CHEBI:30616"/>
        <dbReference type="ChEBI" id="CHEBI:83421"/>
        <dbReference type="ChEBI" id="CHEBI:456216"/>
        <dbReference type="EC" id="2.7.11.1"/>
    </reaction>
</comment>
<comment type="catalytic activity">
    <reaction evidence="5">
        <text>L-threonyl-[protein] + ATP = O-phospho-L-threonyl-[protein] + ADP + H(+)</text>
        <dbReference type="Rhea" id="RHEA:46608"/>
        <dbReference type="Rhea" id="RHEA-COMP:11060"/>
        <dbReference type="Rhea" id="RHEA-COMP:11605"/>
        <dbReference type="ChEBI" id="CHEBI:15378"/>
        <dbReference type="ChEBI" id="CHEBI:30013"/>
        <dbReference type="ChEBI" id="CHEBI:30616"/>
        <dbReference type="ChEBI" id="CHEBI:61977"/>
        <dbReference type="ChEBI" id="CHEBI:456216"/>
        <dbReference type="EC" id="2.7.11.1"/>
    </reaction>
</comment>
<comment type="cofactor">
    <cofactor evidence="5">
        <name>Mg(2+)</name>
        <dbReference type="ChEBI" id="CHEBI:18420"/>
    </cofactor>
</comment>
<comment type="subunit">
    <text evidence="5 7 8">Interacts with unc-14 and vab-8 (PubMed:15539493). Interacts (via C-terminus) with atg-13 (PubMed:19377305). Interacts (via the LIR motif) with lgg-1; the interaction is direct (PubMed:26687600).</text>
</comment>
<comment type="interaction">
    <interactant intactId="EBI-329049">
        <id>Q23023</id>
    </interactant>
    <interactant intactId="EBI-2419199">
        <id>G5ECQ1</id>
        <label>unc-14</label>
    </interactant>
    <organismsDiffer>false</organismsDiffer>
    <experiments>4</experiments>
</comment>
<comment type="interaction">
    <interactant intactId="EBI-329049">
        <id>Q23023</id>
    </interactant>
    <interactant intactId="EBI-2412191">
        <id>Q21441</id>
        <label>vab-8</label>
    </interactant>
    <organismsDiffer>false</organismsDiffer>
    <experiments>4</experiments>
</comment>
<comment type="developmental stage">
    <text evidence="10">During embryonic development unc-51 is expressed extensively, particularly in the head region of late embryos. In the larval stages, expression appears to be restricted to neurons.</text>
</comment>
<comment type="domain">
    <text evidence="8">The LIR motif (LC3-interacting region) is required for its interaction with lgg-1.</text>
</comment>
<comment type="disruption phenotype">
    <text evidence="4 10">Worms exhibit various abnormalities in axonal elongation and axonal structures (PubMed:7958904). RNAi-mediated knockdown causes abnormalities in constitutive dauer formation in daf-2 e1370 mutant including a lack of autophagosome formation (PubMed:12958363).</text>
</comment>
<comment type="similarity">
    <text evidence="1">Belongs to the protein kinase superfamily. Ser/Thr protein kinase family. APG1/unc-51/ULK1 subfamily.</text>
</comment>
<proteinExistence type="evidence at protein level"/>
<gene>
    <name evidence="13" type="primary">unc-51</name>
    <name evidence="13" type="ORF">Y60A3A.1</name>
</gene>
<reference key="1">
    <citation type="journal article" date="1994" name="Genes Dev.">
        <title>Caenorhabditis elegans unc-51 gene required for axonal elongation encodes a novel serine/threonine kinase.</title>
        <authorList>
            <person name="Ogura K."/>
            <person name="Wicky C."/>
            <person name="Magnenat L."/>
            <person name="Tobler H."/>
            <person name="Mori I."/>
            <person name="Mueller F."/>
            <person name="Ohshima Y."/>
        </authorList>
    </citation>
    <scope>NUCLEOTIDE SEQUENCE [MRNA]</scope>
    <scope>FUNCTION</scope>
    <scope>DEVELOPMENTAL STAGE</scope>
    <scope>MUTAGENESIS OF LYS-39 AND ARG-841</scope>
    <scope>DISRUPTION PHENOTYPE</scope>
    <source>
        <strain>Bristol N2</strain>
    </source>
</reference>
<reference key="2">
    <citation type="journal article" date="1998" name="Science">
        <title>Genome sequence of the nematode C. elegans: a platform for investigating biology.</title>
        <authorList>
            <consortium name="The C. elegans sequencing consortium"/>
        </authorList>
    </citation>
    <scope>NUCLEOTIDE SEQUENCE [LARGE SCALE GENOMIC DNA]</scope>
    <source>
        <strain>Bristol N2</strain>
    </source>
</reference>
<reference key="3">
    <citation type="journal article" date="2003" name="Science">
        <title>Autophagy genes are essential for dauer development and life-span extension in C. elegans.</title>
        <authorList>
            <person name="Melendez A."/>
            <person name="Talloczy Z."/>
            <person name="Seaman M."/>
            <person name="Eskelinen E.L."/>
            <person name="Hall D.H."/>
            <person name="Levine B."/>
        </authorList>
    </citation>
    <scope>FUNCTION</scope>
    <scope>DISRUPTION PHENOTYPE</scope>
</reference>
<reference key="4">
    <citation type="journal article" date="2004" name="Development">
        <title>The conserved kinase UNC-51 acts with VAB-8 and UNC-14 to regulate axon outgrowth in C. elegans.</title>
        <authorList>
            <person name="Lai T."/>
            <person name="Garriga G."/>
        </authorList>
    </citation>
    <scope>FUNCTION</scope>
    <scope>CATALYTIC ACTIVITY</scope>
    <scope>COFACTOR</scope>
    <scope>INTERACTION WITH UNC-14 AND VAB-8</scope>
    <scope>MUTAGENESIS OF LYS-39 AND 37-ALA--ILE-41</scope>
</reference>
<reference key="5">
    <citation type="journal article" date="2007" name="Genetics">
        <title>Autophagy genes unc-51 and bec-1 are required for normal cell size in Caenorhabditis elegans.</title>
        <authorList>
            <person name="Aladzsity I."/>
            <person name="Toth M.L."/>
            <person name="Sigmond T."/>
            <person name="Szabo E."/>
            <person name="Bicsak B."/>
            <person name="Barna J."/>
            <person name="Regos A."/>
            <person name="Orosz L."/>
            <person name="Kovacs A.L."/>
            <person name="Vellai T."/>
        </authorList>
    </citation>
    <scope>FUNCTION</scope>
</reference>
<reference key="6">
    <citation type="journal article" date="2009" name="Autophagy">
        <title>epg-1 functions in autophagy-regulated processes and may encode a highly divergent Atg13 homolog in C. elegans.</title>
        <authorList>
            <person name="Tian E."/>
            <person name="Wang F."/>
            <person name="Han J."/>
            <person name="Zhang H."/>
        </authorList>
    </citation>
    <scope>FUNCTION</scope>
    <scope>INTERACTION WITH ATG-13</scope>
</reference>
<reference key="7">
    <citation type="journal article" date="2015" name="Mol. Cell">
        <title>Structural Basis of the Differential Function of the Two C. elegans Atg8 Homologs, LGG-1 and LGG-2, in Autophagy.</title>
        <authorList>
            <person name="Wu F."/>
            <person name="Watanabe Y."/>
            <person name="Guo X.Y."/>
            <person name="Qi X."/>
            <person name="Wang P."/>
            <person name="Zhao H.Y."/>
            <person name="Wang Z."/>
            <person name="Fujioka Y."/>
            <person name="Zhang H."/>
            <person name="Ren J.Q."/>
            <person name="Fang T.C."/>
            <person name="Shen Y.X."/>
            <person name="Feng W."/>
            <person name="Hu J.J."/>
            <person name="Noda N.N."/>
            <person name="Zhang H."/>
        </authorList>
    </citation>
    <scope>FUNCTION</scope>
    <scope>INTERACTION WITH LGG-1</scope>
    <scope>DOMAIN LIR MOTIF</scope>
    <scope>MUTAGENESIS OF PHE-358 AND PHE-360</scope>
</reference>
<reference key="8">
    <citation type="journal article" date="2018" name="Am. J. Physiol.">
        <title>Non-selective autophagy reduces mitochondrial content during starvation in Caenorhabditis elegans.</title>
        <authorList>
            <person name="Hibshman J.D."/>
            <person name="Leuthner T.C."/>
            <person name="Shoben C."/>
            <person name="Mello D.F."/>
            <person name="Sherwood D.R."/>
            <person name="Meyer J.N."/>
            <person name="Baugh L.R."/>
        </authorList>
    </citation>
    <scope>FUNCTION</scope>
</reference>
<name>UNC51_CAEEL</name>
<keyword id="KW-0002">3D-structure</keyword>
<keyword id="KW-0067">ATP-binding</keyword>
<keyword id="KW-0217">Developmental protein</keyword>
<keyword id="KW-0221">Differentiation</keyword>
<keyword id="KW-0418">Kinase</keyword>
<keyword id="KW-0460">Magnesium</keyword>
<keyword id="KW-0479">Metal-binding</keyword>
<keyword id="KW-0524">Neurogenesis</keyword>
<keyword id="KW-0547">Nucleotide-binding</keyword>
<keyword id="KW-1185">Reference proteome</keyword>
<keyword id="KW-0723">Serine/threonine-protein kinase</keyword>
<keyword id="KW-0808">Transferase</keyword>
<accession>Q23023</accession>